<comment type="function">
    <text evidence="1">Component of the eukaryotic translation initiation factor 3 (eIF-3) complex, which is involved in protein synthesis of a specialized repertoire of mRNAs and, together with other initiation factors, stimulates binding of mRNA and methionyl-tRNAi to the 40S ribosome. The eIF-3 complex specifically targets and initiates translation of a subset of mRNAs involved in cell proliferation.</text>
</comment>
<comment type="subunit">
    <text evidence="1">Component of the eukaryotic translation initiation factor 3 (eIF-3) complex.</text>
</comment>
<comment type="subcellular location">
    <subcellularLocation>
        <location evidence="1">Cytoplasm</location>
    </subcellularLocation>
</comment>
<comment type="similarity">
    <text evidence="1">Belongs to the eIF-3 subunit F family.</text>
</comment>
<reference key="1">
    <citation type="journal article" date="2005" name="Science">
        <title>The genome of the basidiomycetous yeast and human pathogen Cryptococcus neoformans.</title>
        <authorList>
            <person name="Loftus B.J."/>
            <person name="Fung E."/>
            <person name="Roncaglia P."/>
            <person name="Rowley D."/>
            <person name="Amedeo P."/>
            <person name="Bruno D."/>
            <person name="Vamathevan J."/>
            <person name="Miranda M."/>
            <person name="Anderson I.J."/>
            <person name="Fraser J.A."/>
            <person name="Allen J.E."/>
            <person name="Bosdet I.E."/>
            <person name="Brent M.R."/>
            <person name="Chiu R."/>
            <person name="Doering T.L."/>
            <person name="Donlin M.J."/>
            <person name="D'Souza C.A."/>
            <person name="Fox D.S."/>
            <person name="Grinberg V."/>
            <person name="Fu J."/>
            <person name="Fukushima M."/>
            <person name="Haas B.J."/>
            <person name="Huang J.C."/>
            <person name="Janbon G."/>
            <person name="Jones S.J.M."/>
            <person name="Koo H.L."/>
            <person name="Krzywinski M.I."/>
            <person name="Kwon-Chung K.J."/>
            <person name="Lengeler K.B."/>
            <person name="Maiti R."/>
            <person name="Marra M.A."/>
            <person name="Marra R.E."/>
            <person name="Mathewson C.A."/>
            <person name="Mitchell T.G."/>
            <person name="Pertea M."/>
            <person name="Riggs F.R."/>
            <person name="Salzberg S.L."/>
            <person name="Schein J.E."/>
            <person name="Shvartsbeyn A."/>
            <person name="Shin H."/>
            <person name="Shumway M."/>
            <person name="Specht C.A."/>
            <person name="Suh B.B."/>
            <person name="Tenney A."/>
            <person name="Utterback T.R."/>
            <person name="Wickes B.L."/>
            <person name="Wortman J.R."/>
            <person name="Wye N.H."/>
            <person name="Kronstad J.W."/>
            <person name="Lodge J.K."/>
            <person name="Heitman J."/>
            <person name="Davis R.W."/>
            <person name="Fraser C.M."/>
            <person name="Hyman R.W."/>
        </authorList>
    </citation>
    <scope>NUCLEOTIDE SEQUENCE [LARGE SCALE GENOMIC DNA]</scope>
    <source>
        <strain>JEC21 / ATCC MYA-565</strain>
    </source>
</reference>
<dbReference type="EMBL" id="AE017346">
    <property type="protein sequence ID" value="AAW44109.1"/>
    <property type="molecule type" value="Genomic_DNA"/>
</dbReference>
<dbReference type="RefSeq" id="XP_571416.1">
    <property type="nucleotide sequence ID" value="XM_571416.2"/>
</dbReference>
<dbReference type="SMR" id="P0CO84"/>
<dbReference type="FunCoup" id="P0CO84">
    <property type="interactions" value="736"/>
</dbReference>
<dbReference type="STRING" id="214684.P0CO84"/>
<dbReference type="PaxDb" id="214684-P0CO84"/>
<dbReference type="EnsemblFungi" id="AAW44109">
    <property type="protein sequence ID" value="AAW44109"/>
    <property type="gene ID" value="CNF04540"/>
</dbReference>
<dbReference type="GeneID" id="3258309"/>
<dbReference type="KEGG" id="cne:CNF04540"/>
<dbReference type="VEuPathDB" id="FungiDB:CNF04540"/>
<dbReference type="eggNOG" id="KOG2975">
    <property type="taxonomic scope" value="Eukaryota"/>
</dbReference>
<dbReference type="HOGENOM" id="CLU_027018_0_2_1"/>
<dbReference type="InParanoid" id="P0CO84"/>
<dbReference type="OMA" id="EYFVHFH"/>
<dbReference type="OrthoDB" id="25498at2759"/>
<dbReference type="Proteomes" id="UP000002149">
    <property type="component" value="Chromosome 6"/>
</dbReference>
<dbReference type="GO" id="GO:0016282">
    <property type="term" value="C:eukaryotic 43S preinitiation complex"/>
    <property type="evidence" value="ECO:0007669"/>
    <property type="project" value="UniProtKB-UniRule"/>
</dbReference>
<dbReference type="GO" id="GO:0033290">
    <property type="term" value="C:eukaryotic 48S preinitiation complex"/>
    <property type="evidence" value="ECO:0007669"/>
    <property type="project" value="UniProtKB-UniRule"/>
</dbReference>
<dbReference type="GO" id="GO:0071540">
    <property type="term" value="C:eukaryotic translation initiation factor 3 complex, eIF3e"/>
    <property type="evidence" value="ECO:0007669"/>
    <property type="project" value="EnsemblFungi"/>
</dbReference>
<dbReference type="GO" id="GO:0071541">
    <property type="term" value="C:eukaryotic translation initiation factor 3 complex, eIF3m"/>
    <property type="evidence" value="ECO:0000318"/>
    <property type="project" value="GO_Central"/>
</dbReference>
<dbReference type="GO" id="GO:0008237">
    <property type="term" value="F:metallopeptidase activity"/>
    <property type="evidence" value="ECO:0007669"/>
    <property type="project" value="InterPro"/>
</dbReference>
<dbReference type="GO" id="GO:0003743">
    <property type="term" value="F:translation initiation factor activity"/>
    <property type="evidence" value="ECO:0007669"/>
    <property type="project" value="UniProtKB-UniRule"/>
</dbReference>
<dbReference type="GO" id="GO:0031369">
    <property type="term" value="F:translation initiation factor binding"/>
    <property type="evidence" value="ECO:0000318"/>
    <property type="project" value="GO_Central"/>
</dbReference>
<dbReference type="GO" id="GO:0001732">
    <property type="term" value="P:formation of cytoplasmic translation initiation complex"/>
    <property type="evidence" value="ECO:0007669"/>
    <property type="project" value="UniProtKB-UniRule"/>
</dbReference>
<dbReference type="GO" id="GO:0006413">
    <property type="term" value="P:translational initiation"/>
    <property type="evidence" value="ECO:0000318"/>
    <property type="project" value="GO_Central"/>
</dbReference>
<dbReference type="CDD" id="cd08064">
    <property type="entry name" value="MPN_eIF3f"/>
    <property type="match status" value="1"/>
</dbReference>
<dbReference type="FunFam" id="3.40.140.10:FF:000081">
    <property type="entry name" value="Eukaryotic translation initiation factor 3 subunit F"/>
    <property type="match status" value="1"/>
</dbReference>
<dbReference type="Gene3D" id="3.40.140.10">
    <property type="entry name" value="Cytidine Deaminase, domain 2"/>
    <property type="match status" value="1"/>
</dbReference>
<dbReference type="HAMAP" id="MF_03005">
    <property type="entry name" value="eIF3f"/>
    <property type="match status" value="1"/>
</dbReference>
<dbReference type="InterPro" id="IPR027531">
    <property type="entry name" value="eIF3f"/>
</dbReference>
<dbReference type="InterPro" id="IPR024969">
    <property type="entry name" value="EIF3F/CSN6-like_C"/>
</dbReference>
<dbReference type="InterPro" id="IPR000555">
    <property type="entry name" value="JAMM/MPN+_dom"/>
</dbReference>
<dbReference type="InterPro" id="IPR037518">
    <property type="entry name" value="MPN"/>
</dbReference>
<dbReference type="PANTHER" id="PTHR10540:SF6">
    <property type="entry name" value="EUKARYOTIC TRANSLATION INITIATION FACTOR 3 SUBUNIT F"/>
    <property type="match status" value="1"/>
</dbReference>
<dbReference type="PANTHER" id="PTHR10540">
    <property type="entry name" value="EUKARYOTIC TRANSLATION INITIATION FACTOR 3 SUBUNIT F-RELATED"/>
    <property type="match status" value="1"/>
</dbReference>
<dbReference type="Pfam" id="PF01398">
    <property type="entry name" value="JAB"/>
    <property type="match status" value="1"/>
</dbReference>
<dbReference type="Pfam" id="PF13012">
    <property type="entry name" value="MitMem_reg"/>
    <property type="match status" value="1"/>
</dbReference>
<dbReference type="SMART" id="SM00232">
    <property type="entry name" value="JAB_MPN"/>
    <property type="match status" value="1"/>
</dbReference>
<dbReference type="PROSITE" id="PS50249">
    <property type="entry name" value="MPN"/>
    <property type="match status" value="1"/>
</dbReference>
<feature type="chain" id="PRO_0000364329" description="Eukaryotic translation initiation factor 3 subunit F">
    <location>
        <begin position="1"/>
        <end position="303"/>
    </location>
</feature>
<feature type="domain" description="MPN" evidence="2">
    <location>
        <begin position="27"/>
        <end position="165"/>
    </location>
</feature>
<feature type="region of interest" description="Disordered" evidence="3">
    <location>
        <begin position="1"/>
        <end position="25"/>
    </location>
</feature>
<feature type="compositionally biased region" description="Polar residues" evidence="3">
    <location>
        <begin position="1"/>
        <end position="10"/>
    </location>
</feature>
<feature type="compositionally biased region" description="Low complexity" evidence="3">
    <location>
        <begin position="12"/>
        <end position="25"/>
    </location>
</feature>
<keyword id="KW-0963">Cytoplasm</keyword>
<keyword id="KW-0396">Initiation factor</keyword>
<keyword id="KW-0648">Protein biosynthesis</keyword>
<keyword id="KW-1185">Reference proteome</keyword>
<sequence length="303" mass="32591">MSLDTSSSAIHLQLPPTSSSLRPPSQITVHPSVIAQILTHHSRHSADSESTRVIGALMGNRSDNGQEVDIRSCFAVPHTEQGQQISVDRPFQQDMVNFLAKNGTKEVIVGWYASQKTVNSNSAIIQEYFSFETNPYPAVHLTVDTDIEESGKGLGVKGWVSQPLGLTSKSECSVFVPVPVSIKYADSERAALDLLTAPQPTPSPALPPLPTLSNSLSQLSSLIDQCLAYVQSVNNGSQTPDVEIGRYLLEGLGRWSASGNEDEGGVKAGLQDTLTVEYLSSLVRSQVELAGRLSLLQQPVAQQ</sequence>
<gene>
    <name type="ordered locus">CNF04540</name>
</gene>
<organism>
    <name type="scientific">Cryptococcus neoformans var. neoformans serotype D (strain JEC21 / ATCC MYA-565)</name>
    <name type="common">Filobasidiella neoformans</name>
    <dbReference type="NCBI Taxonomy" id="214684"/>
    <lineage>
        <taxon>Eukaryota</taxon>
        <taxon>Fungi</taxon>
        <taxon>Dikarya</taxon>
        <taxon>Basidiomycota</taxon>
        <taxon>Agaricomycotina</taxon>
        <taxon>Tremellomycetes</taxon>
        <taxon>Tremellales</taxon>
        <taxon>Cryptococcaceae</taxon>
        <taxon>Cryptococcus</taxon>
        <taxon>Cryptococcus neoformans species complex</taxon>
    </lineage>
</organism>
<accession>P0CO84</accession>
<accession>Q55RF5</accession>
<accession>Q5KER5</accession>
<protein>
    <recommendedName>
        <fullName evidence="1">Eukaryotic translation initiation factor 3 subunit F</fullName>
        <shortName evidence="1">eIF3f</shortName>
    </recommendedName>
</protein>
<proteinExistence type="inferred from homology"/>
<evidence type="ECO:0000255" key="1">
    <source>
        <dbReference type="HAMAP-Rule" id="MF_03005"/>
    </source>
</evidence>
<evidence type="ECO:0000255" key="2">
    <source>
        <dbReference type="PROSITE-ProRule" id="PRU01182"/>
    </source>
</evidence>
<evidence type="ECO:0000256" key="3">
    <source>
        <dbReference type="SAM" id="MobiDB-lite"/>
    </source>
</evidence>
<name>EIF3F_CRYNJ</name>